<feature type="chain" id="PRO_0000418747" description="Probable 2-oxo-3-(5-oxofuran-2-ylidene)propanoate lactonase">
    <location>
        <begin position="1"/>
        <end position="248"/>
    </location>
</feature>
<feature type="active site" evidence="1">
    <location>
        <position position="123"/>
    </location>
</feature>
<feature type="active site" evidence="1">
    <location>
        <position position="180"/>
    </location>
</feature>
<feature type="active site" evidence="1">
    <location>
        <position position="212"/>
    </location>
</feature>
<reference key="1">
    <citation type="journal article" date="2010" name="Appl. Environ. Microbiol.">
        <title>Biodegradation of 5-Nitroanthranilic Acid by Bradyrhizobium sp. Strain JS329.</title>
        <authorList>
            <person name="Qu Y."/>
            <person name="Spain J.C."/>
        </authorList>
    </citation>
    <scope>NUCLEOTIDE SEQUENCE [GENOMIC DNA]</scope>
    <source>
        <strain>JS329</strain>
    </source>
</reference>
<reference key="2">
    <citation type="journal article" date="2011" name="J. Bacteriol.">
        <title>Molecular and biochemical characterization of the 5-nitroanthranilic acid degradation pathway in Bradyrhizobium sp. strain JS329.</title>
        <authorList>
            <person name="Qu Y."/>
            <person name="Spain J.C."/>
        </authorList>
    </citation>
    <scope>FUNCTION</scope>
    <source>
        <strain>JS329</strain>
    </source>
</reference>
<name>NAAC_BRASZ</name>
<proteinExistence type="inferred from homology"/>
<keyword id="KW-0378">Hydrolase</keyword>
<comment type="function">
    <text evidence="3">Involved in the 5-nitroanthranilic acid (5NAA) degradation. Catalyzes the hydrolysis of the lactone to produce maleylpyruvate biodegradation of 5-nitroanthranilate (Probable).</text>
</comment>
<comment type="catalytic activity">
    <reaction>
        <text>2-oxo-3-(5-oxofuran-2-ylidene)propanoate + H2O = 3-maleylpyruvate + H(+)</text>
        <dbReference type="Rhea" id="RHEA:33967"/>
        <dbReference type="ChEBI" id="CHEBI:15377"/>
        <dbReference type="ChEBI" id="CHEBI:15378"/>
        <dbReference type="ChEBI" id="CHEBI:16727"/>
        <dbReference type="ChEBI" id="CHEBI:65081"/>
        <dbReference type="EC" id="3.1.1.91"/>
    </reaction>
</comment>
<comment type="similarity">
    <text evidence="2">Belongs to the dienelactone hydrolase family.</text>
</comment>
<evidence type="ECO:0000250" key="1"/>
<evidence type="ECO:0000305" key="2"/>
<evidence type="ECO:0000305" key="3">
    <source>
    </source>
</evidence>
<sequence>MATETIAMDWVDIGTNGESRLAYLARPVVTGRLPAVIVMPAIHGINTYIKDVAIDLAKAGFVALLIDIHSPEQEPDLSNAEKIQIAVETLDDRKVLKDVDAAVRYLEQHAAVRADRLGILGFCVGGTYALLAARTPAIRVSVGFYGLLEYQSRTDNKPVSPLDSVAQFTAPILFHVGDKDPWIDSKMLAEFTKRMQQHQKSYELCIYRGAGHAFHEHFRDAYRPIAAQSAWNNTLIYLRWHLCGKRTV</sequence>
<organism>
    <name type="scientific">Bradyrhizobium sp</name>
    <dbReference type="NCBI Taxonomy" id="376"/>
    <lineage>
        <taxon>Bacteria</taxon>
        <taxon>Pseudomonadati</taxon>
        <taxon>Pseudomonadota</taxon>
        <taxon>Alphaproteobacteria</taxon>
        <taxon>Hyphomicrobiales</taxon>
        <taxon>Nitrobacteraceae</taxon>
        <taxon>Bradyrhizobium</taxon>
    </lineage>
</organism>
<dbReference type="EC" id="3.1.1.91"/>
<dbReference type="EMBL" id="GU188569">
    <property type="protein sequence ID" value="AEH76925.1"/>
    <property type="molecule type" value="Genomic_DNA"/>
</dbReference>
<dbReference type="SMR" id="F8QQ74"/>
<dbReference type="ESTHER" id="brasz-naac">
    <property type="family name" value="Dienelactone_hydrolase"/>
</dbReference>
<dbReference type="KEGG" id="ag:AEH76925"/>
<dbReference type="BioCyc" id="MetaCyc:MONOMER-17374"/>
<dbReference type="GO" id="GO:0102355">
    <property type="term" value="F:2-oxo-3-(5-oxofuran-2-ylidene)propanoate lactonase activity"/>
    <property type="evidence" value="ECO:0007669"/>
    <property type="project" value="UniProtKB-EC"/>
</dbReference>
<dbReference type="GO" id="GO:0046573">
    <property type="term" value="F:lactonohydrolase activity"/>
    <property type="evidence" value="ECO:0000314"/>
    <property type="project" value="CACAO"/>
</dbReference>
<dbReference type="Gene3D" id="3.40.50.1820">
    <property type="entry name" value="alpha/beta hydrolase"/>
    <property type="match status" value="1"/>
</dbReference>
<dbReference type="InterPro" id="IPR029058">
    <property type="entry name" value="AB_hydrolase_fold"/>
</dbReference>
<dbReference type="InterPro" id="IPR002925">
    <property type="entry name" value="Dienelactn_hydro"/>
</dbReference>
<dbReference type="InterPro" id="IPR051049">
    <property type="entry name" value="Dienelactone_hydrolase-like"/>
</dbReference>
<dbReference type="PANTHER" id="PTHR46623:SF6">
    <property type="entry name" value="ALPHA_BETA-HYDROLASES SUPERFAMILY PROTEIN"/>
    <property type="match status" value="1"/>
</dbReference>
<dbReference type="PANTHER" id="PTHR46623">
    <property type="entry name" value="CARBOXYMETHYLENEBUTENOLIDASE-RELATED"/>
    <property type="match status" value="1"/>
</dbReference>
<dbReference type="Pfam" id="PF01738">
    <property type="entry name" value="DLH"/>
    <property type="match status" value="1"/>
</dbReference>
<dbReference type="SUPFAM" id="SSF53474">
    <property type="entry name" value="alpha/beta-Hydrolases"/>
    <property type="match status" value="1"/>
</dbReference>
<gene>
    <name type="primary">naaC</name>
</gene>
<accession>F8QQ74</accession>
<protein>
    <recommendedName>
        <fullName>Probable 2-oxo-3-(5-oxofuran-2-ylidene)propanoate lactonase</fullName>
        <ecNumber>3.1.1.91</ecNumber>
    </recommendedName>
    <alternativeName>
        <fullName>5-nitroanthranilic acid degradation protein C</fullName>
    </alternativeName>
    <alternativeName>
        <fullName>Lactone hydrolase NaaC</fullName>
    </alternativeName>
</protein>